<accession>Q9ULI3</accession>
<accession>Q6NX66</accession>
<accession>Q8NC40</accession>
<accession>Q9BSV0</accession>
<feature type="signal peptide" evidence="3">
    <location>
        <begin position="1"/>
        <end position="29"/>
    </location>
</feature>
<feature type="chain" id="PRO_0000286981" description="Protein HEG homolog 1">
    <location>
        <begin position="30"/>
        <end position="1381"/>
    </location>
</feature>
<feature type="topological domain" description="Extracellular" evidence="3">
    <location>
        <begin position="30"/>
        <end position="1248"/>
    </location>
</feature>
<feature type="transmembrane region" description="Helical" evidence="3">
    <location>
        <begin position="1249"/>
        <end position="1269"/>
    </location>
</feature>
<feature type="topological domain" description="Cytoplasmic" evidence="3">
    <location>
        <begin position="1270"/>
        <end position="1381"/>
    </location>
</feature>
<feature type="domain" description="EGF-like 1" evidence="4">
    <location>
        <begin position="985"/>
        <end position="1023"/>
    </location>
</feature>
<feature type="domain" description="EGF-like 2; calcium-binding" evidence="4">
    <location>
        <begin position="1025"/>
        <end position="1063"/>
    </location>
</feature>
<feature type="region of interest" description="Disordered" evidence="5">
    <location>
        <begin position="24"/>
        <end position="108"/>
    </location>
</feature>
<feature type="region of interest" description="Disordered" evidence="5">
    <location>
        <begin position="301"/>
        <end position="325"/>
    </location>
</feature>
<feature type="region of interest" description="Disordered" evidence="5">
    <location>
        <begin position="376"/>
        <end position="447"/>
    </location>
</feature>
<feature type="region of interest" description="Disordered" evidence="5">
    <location>
        <begin position="491"/>
        <end position="529"/>
    </location>
</feature>
<feature type="region of interest" description="Disordered" evidence="5">
    <location>
        <begin position="612"/>
        <end position="680"/>
    </location>
</feature>
<feature type="region of interest" description="Disordered" evidence="5">
    <location>
        <begin position="706"/>
        <end position="757"/>
    </location>
</feature>
<feature type="region of interest" description="Disordered" evidence="5">
    <location>
        <begin position="774"/>
        <end position="830"/>
    </location>
</feature>
<feature type="compositionally biased region" description="Pro residues" evidence="5">
    <location>
        <begin position="25"/>
        <end position="37"/>
    </location>
</feature>
<feature type="compositionally biased region" description="Low complexity" evidence="5">
    <location>
        <begin position="38"/>
        <end position="52"/>
    </location>
</feature>
<feature type="compositionally biased region" description="Basic and acidic residues" evidence="5">
    <location>
        <begin position="55"/>
        <end position="74"/>
    </location>
</feature>
<feature type="compositionally biased region" description="Low complexity" evidence="5">
    <location>
        <begin position="93"/>
        <end position="105"/>
    </location>
</feature>
<feature type="compositionally biased region" description="Low complexity" evidence="5">
    <location>
        <begin position="301"/>
        <end position="316"/>
    </location>
</feature>
<feature type="compositionally biased region" description="Polar residues" evidence="5">
    <location>
        <begin position="424"/>
        <end position="444"/>
    </location>
</feature>
<feature type="compositionally biased region" description="Low complexity" evidence="5">
    <location>
        <begin position="508"/>
        <end position="522"/>
    </location>
</feature>
<feature type="compositionally biased region" description="Polar residues" evidence="5">
    <location>
        <begin position="620"/>
        <end position="648"/>
    </location>
</feature>
<feature type="compositionally biased region" description="Low complexity" evidence="5">
    <location>
        <begin position="657"/>
        <end position="680"/>
    </location>
</feature>
<feature type="compositionally biased region" description="Low complexity" evidence="5">
    <location>
        <begin position="706"/>
        <end position="748"/>
    </location>
</feature>
<feature type="compositionally biased region" description="Polar residues" evidence="5">
    <location>
        <begin position="774"/>
        <end position="784"/>
    </location>
</feature>
<feature type="compositionally biased region" description="Polar residues" evidence="5">
    <location>
        <begin position="792"/>
        <end position="809"/>
    </location>
</feature>
<feature type="compositionally biased region" description="Low complexity" evidence="5">
    <location>
        <begin position="810"/>
        <end position="825"/>
    </location>
</feature>
<feature type="modified residue" description="Phosphoserine" evidence="2">
    <location>
        <position position="1359"/>
    </location>
</feature>
<feature type="glycosylation site" description="O-linked (GalNAc...) threonine" evidence="8">
    <location>
        <position position="67"/>
    </location>
</feature>
<feature type="glycosylation site" description="N-linked (GlcNAc...) asparagine" evidence="3">
    <location>
        <position position="123"/>
    </location>
</feature>
<feature type="glycosylation site" description="N-linked (GlcNAc...) asparagine" evidence="7">
    <location>
        <position position="159"/>
    </location>
</feature>
<feature type="glycosylation site" description="N-linked (GlcNAc...) asparagine" evidence="3">
    <location>
        <position position="180"/>
    </location>
</feature>
<feature type="glycosylation site" description="N-linked (GlcNAc...) asparagine" evidence="3">
    <location>
        <position position="314"/>
    </location>
</feature>
<feature type="glycosylation site" description="N-linked (GlcNAc...) asparagine" evidence="3">
    <location>
        <position position="462"/>
    </location>
</feature>
<feature type="glycosylation site" description="N-linked (GlcNAc...) asparagine" evidence="7">
    <location>
        <position position="520"/>
    </location>
</feature>
<feature type="glycosylation site" description="N-linked (GlcNAc...) asparagine" evidence="3">
    <location>
        <position position="610"/>
    </location>
</feature>
<feature type="glycosylation site" description="N-linked (GlcNAc...) asparagine" evidence="3">
    <location>
        <position position="1137"/>
    </location>
</feature>
<feature type="disulfide bond" evidence="4">
    <location>
        <begin position="989"/>
        <end position="1000"/>
    </location>
</feature>
<feature type="disulfide bond" evidence="4">
    <location>
        <begin position="994"/>
        <end position="1011"/>
    </location>
</feature>
<feature type="disulfide bond" evidence="4">
    <location>
        <begin position="1013"/>
        <end position="1022"/>
    </location>
</feature>
<feature type="disulfide bond" evidence="4">
    <location>
        <begin position="1029"/>
        <end position="1040"/>
    </location>
</feature>
<feature type="disulfide bond" evidence="4">
    <location>
        <begin position="1034"/>
        <end position="1049"/>
    </location>
</feature>
<feature type="disulfide bond" evidence="4">
    <location>
        <begin position="1051"/>
        <end position="1062"/>
    </location>
</feature>
<feature type="splice variant" id="VSP_025275" description="In isoform 2." evidence="10">
    <original>VNSCAVNPCLHNGECVADNTSRGYHCR</original>
    <variation>GKTQSHKHMLTARPSPALRATWGSGFM</variation>
    <location>
        <begin position="986"/>
        <end position="1012"/>
    </location>
</feature>
<feature type="splice variant" id="VSP_025276" description="In isoform 2." evidence="10">
    <location>
        <begin position="1013"/>
        <end position="1381"/>
    </location>
</feature>
<feature type="sequence variant" id="VAR_048984" description="In dbSNP:rs4404487.">
    <original>Q</original>
    <variation>R</variation>
    <location>
        <position position="145"/>
    </location>
</feature>
<feature type="sequence variant" id="VAR_059269" description="In dbSNP:rs2981546.">
    <original>S</original>
    <variation>P</variation>
    <location>
        <position position="305"/>
    </location>
</feature>
<feature type="sequence variant" id="VAR_032253" description="In dbSNP:rs6790837.">
    <original>F</original>
    <variation>S</variation>
    <location>
        <position position="602"/>
    </location>
</feature>
<feature type="sequence variant" id="VAR_032254" description="In dbSNP:rs10804567." evidence="6">
    <original>V</original>
    <variation>L</variation>
    <location>
        <position position="980"/>
    </location>
</feature>
<feature type="sequence variant" id="VAR_032255" description="In dbSNP:rs6438869.">
    <original>M</original>
    <variation>T</variation>
    <location>
        <position position="1039"/>
    </location>
</feature>
<reference key="1">
    <citation type="journal article" date="2006" name="Nature">
        <title>The DNA sequence, annotation and analysis of human chromosome 3.</title>
        <authorList>
            <person name="Muzny D.M."/>
            <person name="Scherer S.E."/>
            <person name="Kaul R."/>
            <person name="Wang J."/>
            <person name="Yu J."/>
            <person name="Sudbrak R."/>
            <person name="Buhay C.J."/>
            <person name="Chen R."/>
            <person name="Cree A."/>
            <person name="Ding Y."/>
            <person name="Dugan-Rocha S."/>
            <person name="Gill R."/>
            <person name="Gunaratne P."/>
            <person name="Harris R.A."/>
            <person name="Hawes A.C."/>
            <person name="Hernandez J."/>
            <person name="Hodgson A.V."/>
            <person name="Hume J."/>
            <person name="Jackson A."/>
            <person name="Khan Z.M."/>
            <person name="Kovar-Smith C."/>
            <person name="Lewis L.R."/>
            <person name="Lozado R.J."/>
            <person name="Metzker M.L."/>
            <person name="Milosavljevic A."/>
            <person name="Miner G.R."/>
            <person name="Morgan M.B."/>
            <person name="Nazareth L.V."/>
            <person name="Scott G."/>
            <person name="Sodergren E."/>
            <person name="Song X.-Z."/>
            <person name="Steffen D."/>
            <person name="Wei S."/>
            <person name="Wheeler D.A."/>
            <person name="Wright M.W."/>
            <person name="Worley K.C."/>
            <person name="Yuan Y."/>
            <person name="Zhang Z."/>
            <person name="Adams C.Q."/>
            <person name="Ansari-Lari M.A."/>
            <person name="Ayele M."/>
            <person name="Brown M.J."/>
            <person name="Chen G."/>
            <person name="Chen Z."/>
            <person name="Clendenning J."/>
            <person name="Clerc-Blankenburg K.P."/>
            <person name="Chen R."/>
            <person name="Chen Z."/>
            <person name="Davis C."/>
            <person name="Delgado O."/>
            <person name="Dinh H.H."/>
            <person name="Dong W."/>
            <person name="Draper H."/>
            <person name="Ernst S."/>
            <person name="Fu G."/>
            <person name="Gonzalez-Garay M.L."/>
            <person name="Garcia D.K."/>
            <person name="Gillett W."/>
            <person name="Gu J."/>
            <person name="Hao B."/>
            <person name="Haugen E."/>
            <person name="Havlak P."/>
            <person name="He X."/>
            <person name="Hennig S."/>
            <person name="Hu S."/>
            <person name="Huang W."/>
            <person name="Jackson L.R."/>
            <person name="Jacob L.S."/>
            <person name="Kelly S.H."/>
            <person name="Kube M."/>
            <person name="Levy R."/>
            <person name="Li Z."/>
            <person name="Liu B."/>
            <person name="Liu J."/>
            <person name="Liu W."/>
            <person name="Lu J."/>
            <person name="Maheshwari M."/>
            <person name="Nguyen B.-V."/>
            <person name="Okwuonu G.O."/>
            <person name="Palmeiri A."/>
            <person name="Pasternak S."/>
            <person name="Perez L.M."/>
            <person name="Phelps K.A."/>
            <person name="Plopper F.J."/>
            <person name="Qiang B."/>
            <person name="Raymond C."/>
            <person name="Rodriguez R."/>
            <person name="Saenphimmachak C."/>
            <person name="Santibanez J."/>
            <person name="Shen H."/>
            <person name="Shen Y."/>
            <person name="Subramanian S."/>
            <person name="Tabor P.E."/>
            <person name="Verduzco D."/>
            <person name="Waldron L."/>
            <person name="Wang J."/>
            <person name="Wang J."/>
            <person name="Wang Q."/>
            <person name="Williams G.A."/>
            <person name="Wong G.K.-S."/>
            <person name="Yao Z."/>
            <person name="Zhang J."/>
            <person name="Zhang X."/>
            <person name="Zhao G."/>
            <person name="Zhou J."/>
            <person name="Zhou Y."/>
            <person name="Nelson D."/>
            <person name="Lehrach H."/>
            <person name="Reinhardt R."/>
            <person name="Naylor S.L."/>
            <person name="Yang H."/>
            <person name="Olson M."/>
            <person name="Weinstock G."/>
            <person name="Gibbs R.A."/>
        </authorList>
    </citation>
    <scope>NUCLEOTIDE SEQUENCE [LARGE SCALE GENOMIC DNA]</scope>
</reference>
<reference key="2">
    <citation type="journal article" date="1999" name="DNA Res.">
        <title>Prediction of the coding sequences of unidentified human genes. XV. The complete sequences of 100 new cDNA clones from brain which code for large proteins in vitro.</title>
        <authorList>
            <person name="Nagase T."/>
            <person name="Ishikawa K."/>
            <person name="Kikuno R."/>
            <person name="Hirosawa M."/>
            <person name="Nomura N."/>
            <person name="Ohara O."/>
        </authorList>
    </citation>
    <scope>NUCLEOTIDE SEQUENCE [LARGE SCALE MRNA] OF 114-1381</scope>
    <source>
        <tissue>Brain</tissue>
    </source>
</reference>
<reference key="3">
    <citation type="journal article" date="2004" name="Nat. Genet.">
        <title>Complete sequencing and characterization of 21,243 full-length human cDNAs.</title>
        <authorList>
            <person name="Ota T."/>
            <person name="Suzuki Y."/>
            <person name="Nishikawa T."/>
            <person name="Otsuki T."/>
            <person name="Sugiyama T."/>
            <person name="Irie R."/>
            <person name="Wakamatsu A."/>
            <person name="Hayashi K."/>
            <person name="Sato H."/>
            <person name="Nagai K."/>
            <person name="Kimura K."/>
            <person name="Makita H."/>
            <person name="Sekine M."/>
            <person name="Obayashi M."/>
            <person name="Nishi T."/>
            <person name="Shibahara T."/>
            <person name="Tanaka T."/>
            <person name="Ishii S."/>
            <person name="Yamamoto J."/>
            <person name="Saito K."/>
            <person name="Kawai Y."/>
            <person name="Isono Y."/>
            <person name="Nakamura Y."/>
            <person name="Nagahari K."/>
            <person name="Murakami K."/>
            <person name="Yasuda T."/>
            <person name="Iwayanagi T."/>
            <person name="Wagatsuma M."/>
            <person name="Shiratori A."/>
            <person name="Sudo H."/>
            <person name="Hosoiri T."/>
            <person name="Kaku Y."/>
            <person name="Kodaira H."/>
            <person name="Kondo H."/>
            <person name="Sugawara M."/>
            <person name="Takahashi M."/>
            <person name="Kanda K."/>
            <person name="Yokoi T."/>
            <person name="Furuya T."/>
            <person name="Kikkawa E."/>
            <person name="Omura Y."/>
            <person name="Abe K."/>
            <person name="Kamihara K."/>
            <person name="Katsuta N."/>
            <person name="Sato K."/>
            <person name="Tanikawa M."/>
            <person name="Yamazaki M."/>
            <person name="Ninomiya K."/>
            <person name="Ishibashi T."/>
            <person name="Yamashita H."/>
            <person name="Murakawa K."/>
            <person name="Fujimori K."/>
            <person name="Tanai H."/>
            <person name="Kimata M."/>
            <person name="Watanabe M."/>
            <person name="Hiraoka S."/>
            <person name="Chiba Y."/>
            <person name="Ishida S."/>
            <person name="Ono Y."/>
            <person name="Takiguchi S."/>
            <person name="Watanabe S."/>
            <person name="Yosida M."/>
            <person name="Hotuta T."/>
            <person name="Kusano J."/>
            <person name="Kanehori K."/>
            <person name="Takahashi-Fujii A."/>
            <person name="Hara H."/>
            <person name="Tanase T.-O."/>
            <person name="Nomura Y."/>
            <person name="Togiya S."/>
            <person name="Komai F."/>
            <person name="Hara R."/>
            <person name="Takeuchi K."/>
            <person name="Arita M."/>
            <person name="Imose N."/>
            <person name="Musashino K."/>
            <person name="Yuuki H."/>
            <person name="Oshima A."/>
            <person name="Sasaki N."/>
            <person name="Aotsuka S."/>
            <person name="Yoshikawa Y."/>
            <person name="Matsunawa H."/>
            <person name="Ichihara T."/>
            <person name="Shiohata N."/>
            <person name="Sano S."/>
            <person name="Moriya S."/>
            <person name="Momiyama H."/>
            <person name="Satoh N."/>
            <person name="Takami S."/>
            <person name="Terashima Y."/>
            <person name="Suzuki O."/>
            <person name="Nakagawa S."/>
            <person name="Senoh A."/>
            <person name="Mizoguchi H."/>
            <person name="Goto Y."/>
            <person name="Shimizu F."/>
            <person name="Wakebe H."/>
            <person name="Hishigaki H."/>
            <person name="Watanabe T."/>
            <person name="Sugiyama A."/>
            <person name="Takemoto M."/>
            <person name="Kawakami B."/>
            <person name="Yamazaki M."/>
            <person name="Watanabe K."/>
            <person name="Kumagai A."/>
            <person name="Itakura S."/>
            <person name="Fukuzumi Y."/>
            <person name="Fujimori Y."/>
            <person name="Komiyama M."/>
            <person name="Tashiro H."/>
            <person name="Tanigami A."/>
            <person name="Fujiwara T."/>
            <person name="Ono T."/>
            <person name="Yamada K."/>
            <person name="Fujii Y."/>
            <person name="Ozaki K."/>
            <person name="Hirao M."/>
            <person name="Ohmori Y."/>
            <person name="Kawabata A."/>
            <person name="Hikiji T."/>
            <person name="Kobatake N."/>
            <person name="Inagaki H."/>
            <person name="Ikema Y."/>
            <person name="Okamoto S."/>
            <person name="Okitani R."/>
            <person name="Kawakami T."/>
            <person name="Noguchi S."/>
            <person name="Itoh T."/>
            <person name="Shigeta K."/>
            <person name="Senba T."/>
            <person name="Matsumura K."/>
            <person name="Nakajima Y."/>
            <person name="Mizuno T."/>
            <person name="Morinaga M."/>
            <person name="Sasaki M."/>
            <person name="Togashi T."/>
            <person name="Oyama M."/>
            <person name="Hata H."/>
            <person name="Watanabe M."/>
            <person name="Komatsu T."/>
            <person name="Mizushima-Sugano J."/>
            <person name="Satoh T."/>
            <person name="Shirai Y."/>
            <person name="Takahashi Y."/>
            <person name="Nakagawa K."/>
            <person name="Okumura K."/>
            <person name="Nagase T."/>
            <person name="Nomura N."/>
            <person name="Kikuchi H."/>
            <person name="Masuho Y."/>
            <person name="Yamashita R."/>
            <person name="Nakai K."/>
            <person name="Yada T."/>
            <person name="Nakamura Y."/>
            <person name="Ohara O."/>
            <person name="Isogai T."/>
            <person name="Sugano S."/>
        </authorList>
    </citation>
    <scope>NUCLEOTIDE SEQUENCE [LARGE SCALE MRNA] OF 1117-1381</scope>
</reference>
<reference key="4">
    <citation type="journal article" date="2004" name="Genome Res.">
        <title>The status, quality, and expansion of the NIH full-length cDNA project: the Mammalian Gene Collection (MGC).</title>
        <authorList>
            <consortium name="The MGC Project Team"/>
        </authorList>
    </citation>
    <scope>NUCLEOTIDE SEQUENCE [LARGE SCALE MRNA] OF 682-1381 (ISOFORM 2)</scope>
    <scope>NUCLEOTIDE SEQUENCE [LARGE SCALE MRNA] OF 1140-1381 (ISOFORM 1)</scope>
    <scope>VARIANT LEU-980</scope>
    <source>
        <tissue>Kidney</tissue>
        <tissue>Ovary</tissue>
    </source>
</reference>
<reference key="5">
    <citation type="journal article" date="2005" name="J. Proteome Res.">
        <title>Human plasma N-glycoproteome analysis by immunoaffinity subtraction, hydrazide chemistry, and mass spectrometry.</title>
        <authorList>
            <person name="Liu T."/>
            <person name="Qian W.-J."/>
            <person name="Gritsenko M.A."/>
            <person name="Camp D.G. II"/>
            <person name="Monroe M.E."/>
            <person name="Moore R.J."/>
            <person name="Smith R.D."/>
        </authorList>
    </citation>
    <scope>GLYCOSYLATION [LARGE SCALE ANALYSIS] AT ASN-159 AND ASN-520</scope>
    <source>
        <tissue>Plasma</tissue>
    </source>
</reference>
<reference key="6">
    <citation type="journal article" date="2012" name="Mol. Cell. Proteomics">
        <title>Human urinary glycoproteomics; attachment site specific analysis of N- and O-linked glycosylations by CID and ECD.</title>
        <authorList>
            <person name="Halim A."/>
            <person name="Nilsson J."/>
            <person name="Ruetschi U."/>
            <person name="Hesse C."/>
            <person name="Larson G."/>
        </authorList>
    </citation>
    <scope>GLYCOSYLATION AT THR-67</scope>
    <scope>STRUCTURE OF CARBOHYDRATES</scope>
    <scope>IDENTIFICATION BY MASS SPECTROMETRY</scope>
</reference>
<reference key="7">
    <citation type="journal article" date="2013" name="J. Proteome Res.">
        <title>Toward a comprehensive characterization of a human cancer cell phosphoproteome.</title>
        <authorList>
            <person name="Zhou H."/>
            <person name="Di Palma S."/>
            <person name="Preisinger C."/>
            <person name="Peng M."/>
            <person name="Polat A.N."/>
            <person name="Heck A.J."/>
            <person name="Mohammed S."/>
        </authorList>
    </citation>
    <scope>IDENTIFICATION BY MASS SPECTROMETRY [LARGE SCALE ANALYSIS]</scope>
    <source>
        <tissue>Cervix carcinoma</tissue>
    </source>
</reference>
<reference key="8">
    <citation type="journal article" date="2012" name="J. Cell Biol.">
        <title>Structural basis of the junctional anchorage of the cerebral cavernous malformations complex.</title>
        <authorList>
            <person name="Gingras A.R."/>
            <person name="Liu J.J."/>
            <person name="Ginsberg M.H."/>
        </authorList>
    </citation>
    <scope>X-RAY CRYSTALLOGRAPHY (2.49 ANGSTROMS) OF 1356-1381 IN COMPLEX WITH KRIT1</scope>
    <scope>INTERACTION WITH KRIT1</scope>
</reference>
<evidence type="ECO:0000250" key="1"/>
<evidence type="ECO:0000250" key="2">
    <source>
        <dbReference type="UniProtKB" id="E9Q7X6"/>
    </source>
</evidence>
<evidence type="ECO:0000255" key="3"/>
<evidence type="ECO:0000255" key="4">
    <source>
        <dbReference type="PROSITE-ProRule" id="PRU00076"/>
    </source>
</evidence>
<evidence type="ECO:0000256" key="5">
    <source>
        <dbReference type="SAM" id="MobiDB-lite"/>
    </source>
</evidence>
<evidence type="ECO:0000269" key="6">
    <source>
    </source>
</evidence>
<evidence type="ECO:0000269" key="7">
    <source>
    </source>
</evidence>
<evidence type="ECO:0000269" key="8">
    <source>
    </source>
</evidence>
<evidence type="ECO:0000269" key="9">
    <source>
    </source>
</evidence>
<evidence type="ECO:0000303" key="10">
    <source>
    </source>
</evidence>
<evidence type="ECO:0000305" key="11"/>
<proteinExistence type="evidence at protein level"/>
<sequence>MASPRASRWPPPLLLLLLPLLLLPPAAPGTRDPPPSPARRALSLAPLAGAGLELQLERRPEREPPPTPPRERRGPATPGPSYRAPEPGAATQRGPSGRAPRGGSADAAWKHWPESNTEAHVENITFYQNQEDFSTVSSKEGVMVQTSGKSHAASDAPENLTLLAETADARGRSGSSSRTNFTILPVGYSLEIATALTSQSGNLASESLHLPSSSSEFDERIAAFQTKSGTASEMGTERAMGLSEEWTVHSQEATTSAWSPSFLPALEMGELTTPSRKRNSSGPDLSWLHFYRTAASSPLLDLSSSSESTEKLNNSTGLQSSSVSQTKTMHVATVFTDGGPRTLRSLTVSLGPVSKTEGFPKDSRIATTSSSVLLSPSAVESRRNSRVTGNPGDEEFIEPSTENEFGLTSLRWQNDSPTFGEHQLASSSEVQNGSPMSQTETVSRSVAPMRGGEITAHWLLTNSTTSADVTGSSASYPEGVNASVLTQFSDSTVQSGGSHTALGDRSYSESSSTSSSESLNSSAPRGERSIAGISYGQVRGTAIEQRTSSDHTDHTYLSSTFTKGERALLSITDNSSSSDIVESSTSYIKISNSSHSEYSSFFHAQTERSNISSYDGEYAQPSTESPVLHTSNLPSYTPTINMPNTSVVLDTDAEFVSDSSSSSSSSSSSSSSGPPLPLPSVSQSHHLFSSILPSTRASVHLLKSTSDASTPWSSSPSPLPVSLTTSTSAPLSVSQTTLPQSSSTPVLPRARETPVTSFQTSTMTSFMTMLHSSQTADLKSQSTPHQEKVITESKSPSLVSLPTESTKAVTTNSPLPPSLTESSTEQTLPATSTNLAQMSPTFTTTILKTSQPLMTTPGTLSSTASLVTGPIAVQTTAGKQLSLTHPEILVPQISTEGGISTERNRVIVDATTGLIPLTSVPTSAKEMTTKLGVTAEYSPASRSLGTSPSPQTTVVSTAEDLAPKSATFAVQSSTQSPTTVSSSASVNSCAVNPCLHNGECVADNTSRGYHCRCPPSWQGDDCSVDVNECLSNPCPSTAMCNNTQGSFICKCPVGYQLEKGICNLVRTFVTEFKLKRTFLNTTVEKHSDLQEVENEITKTLNMCFSALPSYIRSTVHASRESNAVVISLQTTFSLASNVTLFDLADRMQKCVNSCKSSAEVCQLLGSQRRIFRAGSLCKRKSPECDKDTSICTDLDGVALCQCKSGYFQFNKMDHSCRACEDGYRLENETCMSCPFGLGGLNCGNPYQLITVVIAAAGGGLLLILGIALIVTCCRKNKNDISKLIFKSGDFQMSPYAEYPKNPRSQEWGREAIEMHENGSTKNLLQMTDVYYSPTSVRNPELERNGLYPAYTGLPGSRHSCIFPGQYNPSFISDESRRRDYF</sequence>
<keyword id="KW-0002">3D-structure</keyword>
<keyword id="KW-0025">Alternative splicing</keyword>
<keyword id="KW-0106">Calcium</keyword>
<keyword id="KW-0965">Cell junction</keyword>
<keyword id="KW-1003">Cell membrane</keyword>
<keyword id="KW-0217">Developmental protein</keyword>
<keyword id="KW-1015">Disulfide bond</keyword>
<keyword id="KW-0245">EGF-like domain</keyword>
<keyword id="KW-0325">Glycoprotein</keyword>
<keyword id="KW-0472">Membrane</keyword>
<keyword id="KW-0597">Phosphoprotein</keyword>
<keyword id="KW-1267">Proteomics identification</keyword>
<keyword id="KW-1185">Reference proteome</keyword>
<keyword id="KW-0677">Repeat</keyword>
<keyword id="KW-0964">Secreted</keyword>
<keyword id="KW-0732">Signal</keyword>
<keyword id="KW-0812">Transmembrane</keyword>
<keyword id="KW-1133">Transmembrane helix</keyword>
<organism>
    <name type="scientific">Homo sapiens</name>
    <name type="common">Human</name>
    <dbReference type="NCBI Taxonomy" id="9606"/>
    <lineage>
        <taxon>Eukaryota</taxon>
        <taxon>Metazoa</taxon>
        <taxon>Chordata</taxon>
        <taxon>Craniata</taxon>
        <taxon>Vertebrata</taxon>
        <taxon>Euteleostomi</taxon>
        <taxon>Mammalia</taxon>
        <taxon>Eutheria</taxon>
        <taxon>Euarchontoglires</taxon>
        <taxon>Primates</taxon>
        <taxon>Haplorrhini</taxon>
        <taxon>Catarrhini</taxon>
        <taxon>Hominidae</taxon>
        <taxon>Homo</taxon>
    </lineage>
</organism>
<name>HEG1_HUMAN</name>
<protein>
    <recommendedName>
        <fullName>Protein HEG homolog 1</fullName>
    </recommendedName>
</protein>
<comment type="function">
    <text evidence="1">Receptor component of the CCM signaling pathway which is a crucial regulator of heart and vessel formation and integrity. May act through the stabilization of endothelial cell junctions.</text>
</comment>
<comment type="subunit">
    <text evidence="9">Interacts with CCM2 and KRIT1; KRIT1 markedly facilitates interaction with CCM2.</text>
</comment>
<comment type="interaction">
    <interactant intactId="EBI-12734419">
        <id>Q9ULI3</id>
    </interactant>
    <interactant intactId="EBI-1573121">
        <id>O00522</id>
        <label>KRIT1</label>
    </interactant>
    <organismsDiffer>false</organismsDiffer>
    <experiments>6</experiments>
</comment>
<comment type="subcellular location">
    <molecule>Isoform 1</molecule>
    <subcellularLocation>
        <location evidence="11">Cell membrane</location>
        <topology evidence="11">Single-pass type I membrane protein</topology>
    </subcellularLocation>
    <subcellularLocation>
        <location evidence="1">Cell junction</location>
    </subcellularLocation>
</comment>
<comment type="subcellular location">
    <molecule>Isoform 2</molecule>
    <subcellularLocation>
        <location evidence="11">Secreted</location>
    </subcellularLocation>
</comment>
<comment type="alternative products">
    <event type="alternative splicing"/>
    <isoform>
        <id>Q9ULI3-1</id>
        <name>1</name>
        <sequence type="displayed"/>
    </isoform>
    <isoform>
        <id>Q9ULI3-2</id>
        <name>2</name>
        <sequence type="described" ref="VSP_025275 VSP_025276"/>
    </isoform>
</comment>
<comment type="sequence caution" evidence="11">
    <conflict type="erroneous initiation">
        <sequence resource="EMBL-CDS" id="AAH67235"/>
    </conflict>
    <text>Truncated N-terminus.</text>
</comment>
<comment type="sequence caution" evidence="11">
    <conflict type="erroneous initiation">
        <sequence resource="EMBL-CDS" id="BAC11336"/>
    </conflict>
    <text>Truncated N-terminus.</text>
</comment>
<dbReference type="EMBL" id="AC026342">
    <property type="status" value="NOT_ANNOTATED_CDS"/>
    <property type="molecule type" value="Genomic_DNA"/>
</dbReference>
<dbReference type="EMBL" id="AC092983">
    <property type="status" value="NOT_ANNOTATED_CDS"/>
    <property type="molecule type" value="Genomic_DNA"/>
</dbReference>
<dbReference type="EMBL" id="AC117488">
    <property type="status" value="NOT_ANNOTATED_CDS"/>
    <property type="molecule type" value="Genomic_DNA"/>
</dbReference>
<dbReference type="EMBL" id="AB033063">
    <property type="protein sequence ID" value="BAA86551.2"/>
    <property type="molecule type" value="mRNA"/>
</dbReference>
<dbReference type="EMBL" id="AK074987">
    <property type="protein sequence ID" value="BAC11336.1"/>
    <property type="status" value="ALT_INIT"/>
    <property type="molecule type" value="mRNA"/>
</dbReference>
<dbReference type="EMBL" id="BC004539">
    <property type="protein sequence ID" value="AAH04539.2"/>
    <property type="molecule type" value="mRNA"/>
</dbReference>
<dbReference type="EMBL" id="BC067235">
    <property type="protein sequence ID" value="AAH67235.1"/>
    <property type="status" value="ALT_INIT"/>
    <property type="molecule type" value="mRNA"/>
</dbReference>
<dbReference type="CCDS" id="CCDS46898.1">
    <molecule id="Q9ULI3-1"/>
</dbReference>
<dbReference type="RefSeq" id="NP_065784.1">
    <molecule id="Q9ULI3-1"/>
    <property type="nucleotide sequence ID" value="NM_020733.2"/>
</dbReference>
<dbReference type="PDB" id="3U7D">
    <property type="method" value="X-ray"/>
    <property type="resolution" value="2.49 A"/>
    <property type="chains" value="B/D=1356-1381"/>
</dbReference>
<dbReference type="PDB" id="4HDQ">
    <property type="method" value="X-ray"/>
    <property type="resolution" value="1.95 A"/>
    <property type="chains" value="C=1356-1381"/>
</dbReference>
<dbReference type="PDBsum" id="3U7D"/>
<dbReference type="PDBsum" id="4HDQ"/>
<dbReference type="SMR" id="Q9ULI3"/>
<dbReference type="BioGRID" id="121560">
    <property type="interactions" value="11"/>
</dbReference>
<dbReference type="CORUM" id="Q9ULI3"/>
<dbReference type="FunCoup" id="Q9ULI3">
    <property type="interactions" value="249"/>
</dbReference>
<dbReference type="IntAct" id="Q9ULI3">
    <property type="interactions" value="4"/>
</dbReference>
<dbReference type="STRING" id="9606.ENSP00000311502"/>
<dbReference type="GlyConnect" id="763">
    <property type="glycosylation" value="18 N-Linked glycans (9 sites), 5 O-Linked glycans (4 sites)"/>
</dbReference>
<dbReference type="GlyCosmos" id="Q9ULI3">
    <property type="glycosylation" value="37 sites, 24 glycans"/>
</dbReference>
<dbReference type="GlyGen" id="Q9ULI3">
    <property type="glycosylation" value="102 sites, 23 N-linked glycans (11 sites), 8 O-linked glycans (86 sites)"/>
</dbReference>
<dbReference type="iPTMnet" id="Q9ULI3"/>
<dbReference type="PhosphoSitePlus" id="Q9ULI3"/>
<dbReference type="SwissPalm" id="Q9ULI3"/>
<dbReference type="BioMuta" id="HEG1"/>
<dbReference type="DMDM" id="147645934"/>
<dbReference type="jPOST" id="Q9ULI3"/>
<dbReference type="MassIVE" id="Q9ULI3"/>
<dbReference type="PaxDb" id="9606-ENSP00000311502"/>
<dbReference type="PeptideAtlas" id="Q9ULI3"/>
<dbReference type="ProteomicsDB" id="85037">
    <molecule id="Q9ULI3-1"/>
</dbReference>
<dbReference type="ProteomicsDB" id="85038">
    <molecule id="Q9ULI3-2"/>
</dbReference>
<dbReference type="Pumba" id="Q9ULI3"/>
<dbReference type="Antibodypedia" id="2617">
    <property type="antibodies" value="16 antibodies from 9 providers"/>
</dbReference>
<dbReference type="DNASU" id="57493"/>
<dbReference type="Ensembl" id="ENST00000311127.9">
    <molecule id="Q9ULI3-1"/>
    <property type="protein sequence ID" value="ENSP00000311502.3"/>
    <property type="gene ID" value="ENSG00000173706.15"/>
</dbReference>
<dbReference type="GeneID" id="57493"/>
<dbReference type="KEGG" id="hsa:57493"/>
<dbReference type="MANE-Select" id="ENST00000311127.9">
    <property type="protein sequence ID" value="ENSP00000311502.3"/>
    <property type="RefSeq nucleotide sequence ID" value="NM_020733.2"/>
    <property type="RefSeq protein sequence ID" value="NP_065784.1"/>
</dbReference>
<dbReference type="UCSC" id="uc003ehs.4">
    <molecule id="Q9ULI3-1"/>
    <property type="organism name" value="human"/>
</dbReference>
<dbReference type="AGR" id="HGNC:29227"/>
<dbReference type="CTD" id="57493"/>
<dbReference type="DisGeNET" id="57493"/>
<dbReference type="GeneCards" id="HEG1"/>
<dbReference type="HGNC" id="HGNC:29227">
    <property type="gene designation" value="HEG1"/>
</dbReference>
<dbReference type="HPA" id="ENSG00000173706">
    <property type="expression patterns" value="Low tissue specificity"/>
</dbReference>
<dbReference type="MIM" id="614182">
    <property type="type" value="gene"/>
</dbReference>
<dbReference type="neXtProt" id="NX_Q9ULI3"/>
<dbReference type="OpenTargets" id="ENSG00000173706"/>
<dbReference type="PharmGKB" id="PA142671699"/>
<dbReference type="VEuPathDB" id="HostDB:ENSG00000173706"/>
<dbReference type="eggNOG" id="ENOG502QPW9">
    <property type="taxonomic scope" value="Eukaryota"/>
</dbReference>
<dbReference type="GeneTree" id="ENSGT00710000106813"/>
<dbReference type="HOGENOM" id="CLU_006913_0_0_1"/>
<dbReference type="InParanoid" id="Q9ULI3"/>
<dbReference type="OMA" id="MGTERAM"/>
<dbReference type="OrthoDB" id="9946171at2759"/>
<dbReference type="PAN-GO" id="Q9ULI3">
    <property type="GO annotations" value="1 GO annotation based on evolutionary models"/>
</dbReference>
<dbReference type="PhylomeDB" id="Q9ULI3"/>
<dbReference type="TreeFam" id="TF335941"/>
<dbReference type="PathwayCommons" id="Q9ULI3"/>
<dbReference type="SignaLink" id="Q9ULI3"/>
<dbReference type="BioGRID-ORCS" id="57493">
    <property type="hits" value="13 hits in 1161 CRISPR screens"/>
</dbReference>
<dbReference type="ChiTaRS" id="HEG1">
    <property type="organism name" value="human"/>
</dbReference>
<dbReference type="EvolutionaryTrace" id="Q9ULI3"/>
<dbReference type="GenomeRNAi" id="57493"/>
<dbReference type="Pharos" id="Q9ULI3">
    <property type="development level" value="Tbio"/>
</dbReference>
<dbReference type="PRO" id="PR:Q9ULI3"/>
<dbReference type="Proteomes" id="UP000005640">
    <property type="component" value="Chromosome 3"/>
</dbReference>
<dbReference type="RNAct" id="Q9ULI3">
    <property type="molecule type" value="protein"/>
</dbReference>
<dbReference type="Bgee" id="ENSG00000173706">
    <property type="expression patterns" value="Expressed in parietal pleura and 210 other cell types or tissues"/>
</dbReference>
<dbReference type="ExpressionAtlas" id="Q9ULI3">
    <property type="expression patterns" value="baseline and differential"/>
</dbReference>
<dbReference type="GO" id="GO:0005911">
    <property type="term" value="C:cell-cell junction"/>
    <property type="evidence" value="ECO:0000314"/>
    <property type="project" value="UniProtKB"/>
</dbReference>
<dbReference type="GO" id="GO:0009897">
    <property type="term" value="C:external side of plasma membrane"/>
    <property type="evidence" value="ECO:0007669"/>
    <property type="project" value="Ensembl"/>
</dbReference>
<dbReference type="GO" id="GO:0005576">
    <property type="term" value="C:extracellular region"/>
    <property type="evidence" value="ECO:0007669"/>
    <property type="project" value="UniProtKB-SubCell"/>
</dbReference>
<dbReference type="GO" id="GO:0005509">
    <property type="term" value="F:calcium ion binding"/>
    <property type="evidence" value="ECO:0007669"/>
    <property type="project" value="InterPro"/>
</dbReference>
<dbReference type="GO" id="GO:0003209">
    <property type="term" value="P:cardiac atrium morphogenesis"/>
    <property type="evidence" value="ECO:0007669"/>
    <property type="project" value="Ensembl"/>
</dbReference>
<dbReference type="GO" id="GO:0055017">
    <property type="term" value="P:cardiac muscle tissue growth"/>
    <property type="evidence" value="ECO:0007669"/>
    <property type="project" value="Ensembl"/>
</dbReference>
<dbReference type="GO" id="GO:0045216">
    <property type="term" value="P:cell-cell junction organization"/>
    <property type="evidence" value="ECO:0007669"/>
    <property type="project" value="Ensembl"/>
</dbReference>
<dbReference type="GO" id="GO:0001886">
    <property type="term" value="P:endothelial cell morphogenesis"/>
    <property type="evidence" value="ECO:0007669"/>
    <property type="project" value="Ensembl"/>
</dbReference>
<dbReference type="GO" id="GO:0007507">
    <property type="term" value="P:heart development"/>
    <property type="evidence" value="ECO:0000318"/>
    <property type="project" value="GO_Central"/>
</dbReference>
<dbReference type="GO" id="GO:0001701">
    <property type="term" value="P:in utero embryonic development"/>
    <property type="evidence" value="ECO:0007669"/>
    <property type="project" value="Ensembl"/>
</dbReference>
<dbReference type="GO" id="GO:0030324">
    <property type="term" value="P:lung development"/>
    <property type="evidence" value="ECO:0007669"/>
    <property type="project" value="Ensembl"/>
</dbReference>
<dbReference type="GO" id="GO:0003017">
    <property type="term" value="P:lymph circulation"/>
    <property type="evidence" value="ECO:0007669"/>
    <property type="project" value="Ensembl"/>
</dbReference>
<dbReference type="GO" id="GO:0001945">
    <property type="term" value="P:lymph vessel development"/>
    <property type="evidence" value="ECO:0007669"/>
    <property type="project" value="Ensembl"/>
</dbReference>
<dbReference type="GO" id="GO:0035264">
    <property type="term" value="P:multicellular organism growth"/>
    <property type="evidence" value="ECO:0007669"/>
    <property type="project" value="Ensembl"/>
</dbReference>
<dbReference type="GO" id="GO:1905709">
    <property type="term" value="P:negative regulation of membrane permeability"/>
    <property type="evidence" value="ECO:0000314"/>
    <property type="project" value="UniProtKB"/>
</dbReference>
<dbReference type="GO" id="GO:0035024">
    <property type="term" value="P:negative regulation of Rho protein signal transduction"/>
    <property type="evidence" value="ECO:0000315"/>
    <property type="project" value="UniProtKB"/>
</dbReference>
<dbReference type="GO" id="GO:2000299">
    <property type="term" value="P:negative regulation of Rho-dependent protein serine/threonine kinase activity"/>
    <property type="evidence" value="ECO:0000314"/>
    <property type="project" value="UniProtKB"/>
</dbReference>
<dbReference type="GO" id="GO:0060039">
    <property type="term" value="P:pericardium development"/>
    <property type="evidence" value="ECO:0007669"/>
    <property type="project" value="Ensembl"/>
</dbReference>
<dbReference type="GO" id="GO:0090271">
    <property type="term" value="P:positive regulation of fibroblast growth factor production"/>
    <property type="evidence" value="ECO:0007669"/>
    <property type="project" value="Ensembl"/>
</dbReference>
<dbReference type="GO" id="GO:0009791">
    <property type="term" value="P:post-embryonic development"/>
    <property type="evidence" value="ECO:0007669"/>
    <property type="project" value="Ensembl"/>
</dbReference>
<dbReference type="GO" id="GO:1902414">
    <property type="term" value="P:protein localization to cell junction"/>
    <property type="evidence" value="ECO:0000315"/>
    <property type="project" value="UniProtKB"/>
</dbReference>
<dbReference type="GO" id="GO:0050878">
    <property type="term" value="P:regulation of body fluid levels"/>
    <property type="evidence" value="ECO:0007669"/>
    <property type="project" value="Ensembl"/>
</dbReference>
<dbReference type="GO" id="GO:0001570">
    <property type="term" value="P:vasculogenesis"/>
    <property type="evidence" value="ECO:0007669"/>
    <property type="project" value="Ensembl"/>
</dbReference>
<dbReference type="GO" id="GO:0048845">
    <property type="term" value="P:venous blood vessel morphogenesis"/>
    <property type="evidence" value="ECO:0007669"/>
    <property type="project" value="Ensembl"/>
</dbReference>
<dbReference type="GO" id="GO:0003281">
    <property type="term" value="P:ventricular septum development"/>
    <property type="evidence" value="ECO:0007669"/>
    <property type="project" value="Ensembl"/>
</dbReference>
<dbReference type="GO" id="GO:0003222">
    <property type="term" value="P:ventricular trabecula myocardium morphogenesis"/>
    <property type="evidence" value="ECO:0007669"/>
    <property type="project" value="Ensembl"/>
</dbReference>
<dbReference type="CDD" id="cd00054">
    <property type="entry name" value="EGF_CA"/>
    <property type="match status" value="2"/>
</dbReference>
<dbReference type="FunFam" id="2.10.25.10:FF:000673">
    <property type="entry name" value="Heart development protein with EGF like domains 1"/>
    <property type="match status" value="1"/>
</dbReference>
<dbReference type="FunFam" id="2.10.25.10:FF:000358">
    <property type="entry name" value="protein HEG homolog 1 isoform X1"/>
    <property type="match status" value="1"/>
</dbReference>
<dbReference type="Gene3D" id="2.10.25.10">
    <property type="entry name" value="Laminin"/>
    <property type="match status" value="2"/>
</dbReference>
<dbReference type="InterPro" id="IPR001881">
    <property type="entry name" value="EGF-like_Ca-bd_dom"/>
</dbReference>
<dbReference type="InterPro" id="IPR000742">
    <property type="entry name" value="EGF-like_dom"/>
</dbReference>
<dbReference type="InterPro" id="IPR000152">
    <property type="entry name" value="EGF-type_Asp/Asn_hydroxyl_site"/>
</dbReference>
<dbReference type="InterPro" id="IPR018097">
    <property type="entry name" value="EGF_Ca-bd_CS"/>
</dbReference>
<dbReference type="InterPro" id="IPR049883">
    <property type="entry name" value="NOTCH1_EGF-like"/>
</dbReference>
<dbReference type="PANTHER" id="PTHR24037">
    <property type="entry name" value="HEART DEVELOPMENT PROTEIN WITH EGF-LIKE DOMAINS 1"/>
    <property type="match status" value="1"/>
</dbReference>
<dbReference type="PANTHER" id="PTHR24037:SF3">
    <property type="entry name" value="PROTEIN HEG HOMOLOG 1"/>
    <property type="match status" value="1"/>
</dbReference>
<dbReference type="Pfam" id="PF00008">
    <property type="entry name" value="EGF"/>
    <property type="match status" value="1"/>
</dbReference>
<dbReference type="Pfam" id="PF07645">
    <property type="entry name" value="EGF_CA"/>
    <property type="match status" value="1"/>
</dbReference>
<dbReference type="SMART" id="SM00181">
    <property type="entry name" value="EGF"/>
    <property type="match status" value="3"/>
</dbReference>
<dbReference type="SMART" id="SM00179">
    <property type="entry name" value="EGF_CA"/>
    <property type="match status" value="2"/>
</dbReference>
<dbReference type="SUPFAM" id="SSF57196">
    <property type="entry name" value="EGF/Laminin"/>
    <property type="match status" value="2"/>
</dbReference>
<dbReference type="PROSITE" id="PS00010">
    <property type="entry name" value="ASX_HYDROXYL"/>
    <property type="match status" value="1"/>
</dbReference>
<dbReference type="PROSITE" id="PS00022">
    <property type="entry name" value="EGF_1"/>
    <property type="match status" value="1"/>
</dbReference>
<dbReference type="PROSITE" id="PS01186">
    <property type="entry name" value="EGF_2"/>
    <property type="match status" value="1"/>
</dbReference>
<dbReference type="PROSITE" id="PS50026">
    <property type="entry name" value="EGF_3"/>
    <property type="match status" value="2"/>
</dbReference>
<dbReference type="PROSITE" id="PS01187">
    <property type="entry name" value="EGF_CA"/>
    <property type="match status" value="1"/>
</dbReference>
<gene>
    <name type="primary">HEG1</name>
    <name type="synonym">KIAA1237</name>
</gene>